<evidence type="ECO:0000255" key="1">
    <source>
        <dbReference type="HAMAP-Rule" id="MF_01208"/>
    </source>
</evidence>
<comment type="function">
    <text evidence="1">Catalyzes the transfer of a ribosyl phosphate group from 5-phosphoribose 1-diphosphate to orotate, leading to the formation of orotidine monophosphate (OMP).</text>
</comment>
<comment type="catalytic activity">
    <reaction evidence="1">
        <text>orotidine 5'-phosphate + diphosphate = orotate + 5-phospho-alpha-D-ribose 1-diphosphate</text>
        <dbReference type="Rhea" id="RHEA:10380"/>
        <dbReference type="ChEBI" id="CHEBI:30839"/>
        <dbReference type="ChEBI" id="CHEBI:33019"/>
        <dbReference type="ChEBI" id="CHEBI:57538"/>
        <dbReference type="ChEBI" id="CHEBI:58017"/>
        <dbReference type="EC" id="2.4.2.10"/>
    </reaction>
</comment>
<comment type="cofactor">
    <cofactor evidence="1">
        <name>Mg(2+)</name>
        <dbReference type="ChEBI" id="CHEBI:18420"/>
    </cofactor>
</comment>
<comment type="pathway">
    <text evidence="1">Pyrimidine metabolism; UMP biosynthesis via de novo pathway; UMP from orotate: step 1/2.</text>
</comment>
<comment type="subunit">
    <text evidence="1">Homodimer.</text>
</comment>
<comment type="similarity">
    <text evidence="1">Belongs to the purine/pyrimidine phosphoribosyltransferase family. PyrE subfamily.</text>
</comment>
<proteinExistence type="inferred from homology"/>
<sequence length="213" mass="23170">MQAYQRDFIRFAIDRGVLRFGEFTLKSGRTSPYFFNAGLFNTGSALAQLGRFYAAAVVESGIRFDVLFGPAYKGIPLASATAVALAEHHDRDLPWCFNRKEAKAHGEGGSLVGSPLAGNVLIIDDVITAGTAIREVMQIIKDQDATAAGVLIALNRQERGNGELSAIQEVERDFGIPVVSIVSLNQVLEFLADDEQLKQHLPAVEAYRAQYGI</sequence>
<reference key="1">
    <citation type="journal article" date="2003" name="Proc. Natl. Acad. Sci. U.S.A.">
        <title>The complete genome sequence of the Arabidopsis and tomato pathogen Pseudomonas syringae pv. tomato DC3000.</title>
        <authorList>
            <person name="Buell C.R."/>
            <person name="Joardar V."/>
            <person name="Lindeberg M."/>
            <person name="Selengut J."/>
            <person name="Paulsen I.T."/>
            <person name="Gwinn M.L."/>
            <person name="Dodson R.J."/>
            <person name="DeBoy R.T."/>
            <person name="Durkin A.S."/>
            <person name="Kolonay J.F."/>
            <person name="Madupu R."/>
            <person name="Daugherty S.C."/>
            <person name="Brinkac L.M."/>
            <person name="Beanan M.J."/>
            <person name="Haft D.H."/>
            <person name="Nelson W.C."/>
            <person name="Davidsen T.M."/>
            <person name="Zafar N."/>
            <person name="Zhou L."/>
            <person name="Liu J."/>
            <person name="Yuan Q."/>
            <person name="Khouri H.M."/>
            <person name="Fedorova N.B."/>
            <person name="Tran B."/>
            <person name="Russell D."/>
            <person name="Berry K.J."/>
            <person name="Utterback T.R."/>
            <person name="Van Aken S.E."/>
            <person name="Feldblyum T.V."/>
            <person name="D'Ascenzo M."/>
            <person name="Deng W.-L."/>
            <person name="Ramos A.R."/>
            <person name="Alfano J.R."/>
            <person name="Cartinhour S."/>
            <person name="Chatterjee A.K."/>
            <person name="Delaney T.P."/>
            <person name="Lazarowitz S.G."/>
            <person name="Martin G.B."/>
            <person name="Schneider D.J."/>
            <person name="Tang X."/>
            <person name="Bender C.L."/>
            <person name="White O."/>
            <person name="Fraser C.M."/>
            <person name="Collmer A."/>
        </authorList>
    </citation>
    <scope>NUCLEOTIDE SEQUENCE [LARGE SCALE GENOMIC DNA]</scope>
    <source>
        <strain>ATCC BAA-871 / DC3000</strain>
    </source>
</reference>
<gene>
    <name evidence="1" type="primary">pyrE</name>
    <name type="ordered locus">PSPTO_0080</name>
</gene>
<keyword id="KW-0328">Glycosyltransferase</keyword>
<keyword id="KW-0460">Magnesium</keyword>
<keyword id="KW-0665">Pyrimidine biosynthesis</keyword>
<keyword id="KW-1185">Reference proteome</keyword>
<keyword id="KW-0808">Transferase</keyword>
<dbReference type="EC" id="2.4.2.10" evidence="1"/>
<dbReference type="EMBL" id="AE016853">
    <property type="protein sequence ID" value="AAO53634.1"/>
    <property type="molecule type" value="Genomic_DNA"/>
</dbReference>
<dbReference type="RefSeq" id="NP_789939.1">
    <property type="nucleotide sequence ID" value="NC_004578.1"/>
</dbReference>
<dbReference type="RefSeq" id="WP_007246510.1">
    <property type="nucleotide sequence ID" value="NC_004578.1"/>
</dbReference>
<dbReference type="SMR" id="Q88BD7"/>
<dbReference type="STRING" id="223283.PSPTO_0080"/>
<dbReference type="GeneID" id="1181688"/>
<dbReference type="KEGG" id="pst:PSPTO_0080"/>
<dbReference type="PATRIC" id="fig|223283.9.peg.84"/>
<dbReference type="eggNOG" id="COG0461">
    <property type="taxonomic scope" value="Bacteria"/>
</dbReference>
<dbReference type="HOGENOM" id="CLU_074878_0_1_6"/>
<dbReference type="OrthoDB" id="9779060at2"/>
<dbReference type="PhylomeDB" id="Q88BD7"/>
<dbReference type="UniPathway" id="UPA00070">
    <property type="reaction ID" value="UER00119"/>
</dbReference>
<dbReference type="Proteomes" id="UP000002515">
    <property type="component" value="Chromosome"/>
</dbReference>
<dbReference type="GO" id="GO:0005737">
    <property type="term" value="C:cytoplasm"/>
    <property type="evidence" value="ECO:0007669"/>
    <property type="project" value="TreeGrafter"/>
</dbReference>
<dbReference type="GO" id="GO:0000287">
    <property type="term" value="F:magnesium ion binding"/>
    <property type="evidence" value="ECO:0007669"/>
    <property type="project" value="UniProtKB-UniRule"/>
</dbReference>
<dbReference type="GO" id="GO:0004588">
    <property type="term" value="F:orotate phosphoribosyltransferase activity"/>
    <property type="evidence" value="ECO:0007669"/>
    <property type="project" value="UniProtKB-UniRule"/>
</dbReference>
<dbReference type="GO" id="GO:0006207">
    <property type="term" value="P:'de novo' pyrimidine nucleobase biosynthetic process"/>
    <property type="evidence" value="ECO:0007669"/>
    <property type="project" value="TreeGrafter"/>
</dbReference>
<dbReference type="GO" id="GO:0044205">
    <property type="term" value="P:'de novo' UMP biosynthetic process"/>
    <property type="evidence" value="ECO:0007669"/>
    <property type="project" value="UniProtKB-UniRule"/>
</dbReference>
<dbReference type="GO" id="GO:0046132">
    <property type="term" value="P:pyrimidine ribonucleoside biosynthetic process"/>
    <property type="evidence" value="ECO:0007669"/>
    <property type="project" value="TreeGrafter"/>
</dbReference>
<dbReference type="CDD" id="cd06223">
    <property type="entry name" value="PRTases_typeI"/>
    <property type="match status" value="1"/>
</dbReference>
<dbReference type="FunFam" id="3.40.50.2020:FF:000008">
    <property type="entry name" value="Orotate phosphoribosyltransferase"/>
    <property type="match status" value="1"/>
</dbReference>
<dbReference type="Gene3D" id="3.40.50.2020">
    <property type="match status" value="1"/>
</dbReference>
<dbReference type="HAMAP" id="MF_01208">
    <property type="entry name" value="PyrE"/>
    <property type="match status" value="1"/>
</dbReference>
<dbReference type="InterPro" id="IPR023031">
    <property type="entry name" value="OPRT"/>
</dbReference>
<dbReference type="InterPro" id="IPR004467">
    <property type="entry name" value="Or_phspho_trans_dom"/>
</dbReference>
<dbReference type="InterPro" id="IPR000836">
    <property type="entry name" value="PRibTrfase_dom"/>
</dbReference>
<dbReference type="InterPro" id="IPR029057">
    <property type="entry name" value="PRTase-like"/>
</dbReference>
<dbReference type="NCBIfam" id="TIGR00336">
    <property type="entry name" value="pyrE"/>
    <property type="match status" value="1"/>
</dbReference>
<dbReference type="PANTHER" id="PTHR46683">
    <property type="entry name" value="OROTATE PHOSPHORIBOSYLTRANSFERASE 1-RELATED"/>
    <property type="match status" value="1"/>
</dbReference>
<dbReference type="PANTHER" id="PTHR46683:SF1">
    <property type="entry name" value="OROTATE PHOSPHORIBOSYLTRANSFERASE 1-RELATED"/>
    <property type="match status" value="1"/>
</dbReference>
<dbReference type="Pfam" id="PF00156">
    <property type="entry name" value="Pribosyltran"/>
    <property type="match status" value="1"/>
</dbReference>
<dbReference type="SUPFAM" id="SSF53271">
    <property type="entry name" value="PRTase-like"/>
    <property type="match status" value="1"/>
</dbReference>
<dbReference type="PROSITE" id="PS00103">
    <property type="entry name" value="PUR_PYR_PR_TRANSFER"/>
    <property type="match status" value="1"/>
</dbReference>
<organism>
    <name type="scientific">Pseudomonas syringae pv. tomato (strain ATCC BAA-871 / DC3000)</name>
    <dbReference type="NCBI Taxonomy" id="223283"/>
    <lineage>
        <taxon>Bacteria</taxon>
        <taxon>Pseudomonadati</taxon>
        <taxon>Pseudomonadota</taxon>
        <taxon>Gammaproteobacteria</taxon>
        <taxon>Pseudomonadales</taxon>
        <taxon>Pseudomonadaceae</taxon>
        <taxon>Pseudomonas</taxon>
    </lineage>
</organism>
<feature type="chain" id="PRO_0000110726" description="Orotate phosphoribosyltransferase">
    <location>
        <begin position="1"/>
        <end position="213"/>
    </location>
</feature>
<feature type="binding site" description="in other chain" evidence="1">
    <location>
        <position position="26"/>
    </location>
    <ligand>
        <name>5-phospho-alpha-D-ribose 1-diphosphate</name>
        <dbReference type="ChEBI" id="CHEBI:58017"/>
        <note>ligand shared between dimeric partners</note>
    </ligand>
</feature>
<feature type="binding site" evidence="1">
    <location>
        <begin position="34"/>
        <end position="35"/>
    </location>
    <ligand>
        <name>orotate</name>
        <dbReference type="ChEBI" id="CHEBI:30839"/>
    </ligand>
</feature>
<feature type="binding site" description="in other chain" evidence="1">
    <location>
        <begin position="72"/>
        <end position="73"/>
    </location>
    <ligand>
        <name>5-phospho-alpha-D-ribose 1-diphosphate</name>
        <dbReference type="ChEBI" id="CHEBI:58017"/>
        <note>ligand shared between dimeric partners</note>
    </ligand>
</feature>
<feature type="binding site" evidence="1">
    <location>
        <position position="99"/>
    </location>
    <ligand>
        <name>5-phospho-alpha-D-ribose 1-diphosphate</name>
        <dbReference type="ChEBI" id="CHEBI:58017"/>
        <note>ligand shared between dimeric partners</note>
    </ligand>
</feature>
<feature type="binding site" description="in other chain" evidence="1">
    <location>
        <position position="100"/>
    </location>
    <ligand>
        <name>5-phospho-alpha-D-ribose 1-diphosphate</name>
        <dbReference type="ChEBI" id="CHEBI:58017"/>
        <note>ligand shared between dimeric partners</note>
    </ligand>
</feature>
<feature type="binding site" evidence="1">
    <location>
        <position position="103"/>
    </location>
    <ligand>
        <name>5-phospho-alpha-D-ribose 1-diphosphate</name>
        <dbReference type="ChEBI" id="CHEBI:58017"/>
        <note>ligand shared between dimeric partners</note>
    </ligand>
</feature>
<feature type="binding site" evidence="1">
    <location>
        <position position="105"/>
    </location>
    <ligand>
        <name>5-phospho-alpha-D-ribose 1-diphosphate</name>
        <dbReference type="ChEBI" id="CHEBI:58017"/>
        <note>ligand shared between dimeric partners</note>
    </ligand>
</feature>
<feature type="binding site" description="in other chain" evidence="1">
    <location>
        <begin position="124"/>
        <end position="132"/>
    </location>
    <ligand>
        <name>5-phospho-alpha-D-ribose 1-diphosphate</name>
        <dbReference type="ChEBI" id="CHEBI:58017"/>
        <note>ligand shared between dimeric partners</note>
    </ligand>
</feature>
<feature type="binding site" evidence="1">
    <location>
        <position position="128"/>
    </location>
    <ligand>
        <name>orotate</name>
        <dbReference type="ChEBI" id="CHEBI:30839"/>
    </ligand>
</feature>
<feature type="binding site" evidence="1">
    <location>
        <position position="156"/>
    </location>
    <ligand>
        <name>orotate</name>
        <dbReference type="ChEBI" id="CHEBI:30839"/>
    </ligand>
</feature>
<name>PYRE_PSESM</name>
<accession>Q88BD7</accession>
<protein>
    <recommendedName>
        <fullName evidence="1">Orotate phosphoribosyltransferase</fullName>
        <shortName evidence="1">OPRT</shortName>
        <shortName evidence="1">OPRTase</shortName>
        <ecNumber evidence="1">2.4.2.10</ecNumber>
    </recommendedName>
</protein>